<accession>Q5HNZ8</accession>
<reference key="1">
    <citation type="journal article" date="2005" name="J. Bacteriol.">
        <title>Insights on evolution of virulence and resistance from the complete genome analysis of an early methicillin-resistant Staphylococcus aureus strain and a biofilm-producing methicillin-resistant Staphylococcus epidermidis strain.</title>
        <authorList>
            <person name="Gill S.R."/>
            <person name="Fouts D.E."/>
            <person name="Archer G.L."/>
            <person name="Mongodin E.F."/>
            <person name="DeBoy R.T."/>
            <person name="Ravel J."/>
            <person name="Paulsen I.T."/>
            <person name="Kolonay J.F."/>
            <person name="Brinkac L.M."/>
            <person name="Beanan M.J."/>
            <person name="Dodson R.J."/>
            <person name="Daugherty S.C."/>
            <person name="Madupu R."/>
            <person name="Angiuoli S.V."/>
            <person name="Durkin A.S."/>
            <person name="Haft D.H."/>
            <person name="Vamathevan J.J."/>
            <person name="Khouri H."/>
            <person name="Utterback T.R."/>
            <person name="Lee C."/>
            <person name="Dimitrov G."/>
            <person name="Jiang L."/>
            <person name="Qin H."/>
            <person name="Weidman J."/>
            <person name="Tran K."/>
            <person name="Kang K.H."/>
            <person name="Hance I.R."/>
            <person name="Nelson K.E."/>
            <person name="Fraser C.M."/>
        </authorList>
    </citation>
    <scope>NUCLEOTIDE SEQUENCE [LARGE SCALE GENOMIC DNA]</scope>
    <source>
        <strain>ATCC 35984 / DSM 28319 / BCRC 17069 / CCUG 31568 / BM 3577 / RP62A</strain>
    </source>
</reference>
<gene>
    <name evidence="1" type="primary">rpmG1</name>
    <name type="ordered locus">SERP1116</name>
</gene>
<comment type="similarity">
    <text evidence="1">Belongs to the bacterial ribosomal protein bL33 family.</text>
</comment>
<dbReference type="EMBL" id="CP000029">
    <property type="protein sequence ID" value="AAW54522.1"/>
    <property type="molecule type" value="Genomic_DNA"/>
</dbReference>
<dbReference type="SMR" id="Q5HNZ8"/>
<dbReference type="STRING" id="176279.SERP1116"/>
<dbReference type="KEGG" id="ser:SERP1116"/>
<dbReference type="eggNOG" id="COG0267">
    <property type="taxonomic scope" value="Bacteria"/>
</dbReference>
<dbReference type="HOGENOM" id="CLU_190949_0_2_9"/>
<dbReference type="Proteomes" id="UP000000531">
    <property type="component" value="Chromosome"/>
</dbReference>
<dbReference type="GO" id="GO:0005737">
    <property type="term" value="C:cytoplasm"/>
    <property type="evidence" value="ECO:0007669"/>
    <property type="project" value="UniProtKB-ARBA"/>
</dbReference>
<dbReference type="GO" id="GO:1990904">
    <property type="term" value="C:ribonucleoprotein complex"/>
    <property type="evidence" value="ECO:0007669"/>
    <property type="project" value="UniProtKB-KW"/>
</dbReference>
<dbReference type="GO" id="GO:0005840">
    <property type="term" value="C:ribosome"/>
    <property type="evidence" value="ECO:0007669"/>
    <property type="project" value="UniProtKB-KW"/>
</dbReference>
<dbReference type="GO" id="GO:0003735">
    <property type="term" value="F:structural constituent of ribosome"/>
    <property type="evidence" value="ECO:0007669"/>
    <property type="project" value="InterPro"/>
</dbReference>
<dbReference type="GO" id="GO:0006412">
    <property type="term" value="P:translation"/>
    <property type="evidence" value="ECO:0007669"/>
    <property type="project" value="UniProtKB-UniRule"/>
</dbReference>
<dbReference type="Gene3D" id="2.20.28.120">
    <property type="entry name" value="Ribosomal protein L33"/>
    <property type="match status" value="1"/>
</dbReference>
<dbReference type="HAMAP" id="MF_00294">
    <property type="entry name" value="Ribosomal_bL33"/>
    <property type="match status" value="1"/>
</dbReference>
<dbReference type="InterPro" id="IPR001705">
    <property type="entry name" value="Ribosomal_bL33"/>
</dbReference>
<dbReference type="InterPro" id="IPR018264">
    <property type="entry name" value="Ribosomal_bL33_CS"/>
</dbReference>
<dbReference type="InterPro" id="IPR038584">
    <property type="entry name" value="Ribosomal_bL33_sf"/>
</dbReference>
<dbReference type="InterPro" id="IPR011332">
    <property type="entry name" value="Ribosomal_zn-bd"/>
</dbReference>
<dbReference type="NCBIfam" id="NF001764">
    <property type="entry name" value="PRK00504.1"/>
    <property type="match status" value="1"/>
</dbReference>
<dbReference type="NCBIfam" id="NF001860">
    <property type="entry name" value="PRK00595.1"/>
    <property type="match status" value="1"/>
</dbReference>
<dbReference type="NCBIfam" id="TIGR01023">
    <property type="entry name" value="rpmG_bact"/>
    <property type="match status" value="1"/>
</dbReference>
<dbReference type="PANTHER" id="PTHR43168">
    <property type="entry name" value="50S RIBOSOMAL PROTEIN L33, CHLOROPLASTIC"/>
    <property type="match status" value="1"/>
</dbReference>
<dbReference type="PANTHER" id="PTHR43168:SF2">
    <property type="entry name" value="LARGE RIBOSOMAL SUBUNIT PROTEIN BL33C"/>
    <property type="match status" value="1"/>
</dbReference>
<dbReference type="Pfam" id="PF00471">
    <property type="entry name" value="Ribosomal_L33"/>
    <property type="match status" value="1"/>
</dbReference>
<dbReference type="SUPFAM" id="SSF57829">
    <property type="entry name" value="Zn-binding ribosomal proteins"/>
    <property type="match status" value="1"/>
</dbReference>
<dbReference type="PROSITE" id="PS00582">
    <property type="entry name" value="RIBOSOMAL_L33"/>
    <property type="match status" value="1"/>
</dbReference>
<keyword id="KW-1185">Reference proteome</keyword>
<keyword id="KW-0687">Ribonucleoprotein</keyword>
<keyword id="KW-0689">Ribosomal protein</keyword>
<organism>
    <name type="scientific">Staphylococcus epidermidis (strain ATCC 35984 / DSM 28319 / BCRC 17069 / CCUG 31568 / BM 3577 / RP62A)</name>
    <dbReference type="NCBI Taxonomy" id="176279"/>
    <lineage>
        <taxon>Bacteria</taxon>
        <taxon>Bacillati</taxon>
        <taxon>Bacillota</taxon>
        <taxon>Bacilli</taxon>
        <taxon>Bacillales</taxon>
        <taxon>Staphylococcaceae</taxon>
        <taxon>Staphylococcus</taxon>
    </lineage>
</organism>
<feature type="chain" id="PRO_0000170232" description="Large ribosomal subunit protein bL33A">
    <location>
        <begin position="1"/>
        <end position="49"/>
    </location>
</feature>
<feature type="region of interest" description="Disordered" evidence="2">
    <location>
        <begin position="21"/>
        <end position="49"/>
    </location>
</feature>
<feature type="compositionally biased region" description="Basic and acidic residues" evidence="2">
    <location>
        <begin position="25"/>
        <end position="49"/>
    </location>
</feature>
<sequence>MRVNVTLACTECGDRNYISTKNKRNNPERVEMKKYCSRDNKHTLHRETK</sequence>
<evidence type="ECO:0000255" key="1">
    <source>
        <dbReference type="HAMAP-Rule" id="MF_00294"/>
    </source>
</evidence>
<evidence type="ECO:0000256" key="2">
    <source>
        <dbReference type="SAM" id="MobiDB-lite"/>
    </source>
</evidence>
<name>RL331_STAEQ</name>
<protein>
    <recommendedName>
        <fullName evidence="1">Large ribosomal subunit protein bL33A</fullName>
    </recommendedName>
    <alternativeName>
        <fullName evidence="1">50S ribosomal protein L33 1</fullName>
    </alternativeName>
</protein>
<proteinExistence type="inferred from homology"/>